<organism>
    <name type="scientific">Homo sapiens</name>
    <name type="common">Human</name>
    <dbReference type="NCBI Taxonomy" id="9606"/>
    <lineage>
        <taxon>Eukaryota</taxon>
        <taxon>Metazoa</taxon>
        <taxon>Chordata</taxon>
        <taxon>Craniata</taxon>
        <taxon>Vertebrata</taxon>
        <taxon>Euteleostomi</taxon>
        <taxon>Mammalia</taxon>
        <taxon>Eutheria</taxon>
        <taxon>Euarchontoglires</taxon>
        <taxon>Primates</taxon>
        <taxon>Haplorrhini</taxon>
        <taxon>Catarrhini</taxon>
        <taxon>Hominidae</taxon>
        <taxon>Homo</taxon>
    </lineage>
</organism>
<accession>Q6ZN92</accession>
<keyword id="KW-1185">Reference proteome</keyword>
<sequence>MPVIPALGEAKGEVLPPGDTTTIIPLNWMLKSPPGHFGLLLLLSQQAKNGVMVLAGVTDPEYQDEISLLLHNEGHLKEVKMEGARLGLPGRAESLEHQVQSHLNMIAQSQRTFQKKDAGKAIILSKLTQEQKTKHCMFSLH</sequence>
<dbReference type="EMBL" id="AK131322">
    <property type="protein sequence ID" value="BAD18483.1"/>
    <property type="molecule type" value="mRNA"/>
</dbReference>
<dbReference type="RefSeq" id="NP_001004352.1">
    <property type="nucleotide sequence ID" value="NM_001004352.2"/>
</dbReference>
<dbReference type="SMR" id="Q6ZN92"/>
<dbReference type="BioGRID" id="137425">
    <property type="interactions" value="2"/>
</dbReference>
<dbReference type="FunCoup" id="Q6ZN92">
    <property type="interactions" value="7"/>
</dbReference>
<dbReference type="IntAct" id="Q6ZN92">
    <property type="interactions" value="2"/>
</dbReference>
<dbReference type="iPTMnet" id="Q6ZN92"/>
<dbReference type="PhosphoSitePlus" id="Q6ZN92"/>
<dbReference type="BioMuta" id="-"/>
<dbReference type="DMDM" id="74722930"/>
<dbReference type="DNASU" id="100506422"/>
<dbReference type="AGR" id="HGNC:56836"/>
<dbReference type="neXtProt" id="NX_Q6ZN92"/>
<dbReference type="InParanoid" id="Q6ZN92"/>
<dbReference type="PAN-GO" id="Q6ZN92">
    <property type="GO annotations" value="4 GO annotations based on evolutionary models"/>
</dbReference>
<dbReference type="PathwayCommons" id="Q6ZN92"/>
<dbReference type="BioGRID-ORCS" id="100506422">
    <property type="hits" value="10 hits in 193 CRISPR screens"/>
</dbReference>
<dbReference type="GenomeRNAi" id="100506422"/>
<dbReference type="Pharos" id="Q6ZN92">
    <property type="development level" value="Tdark"/>
</dbReference>
<dbReference type="Proteomes" id="UP000005640">
    <property type="component" value="Unplaced"/>
</dbReference>
<dbReference type="RNAct" id="Q6ZN92">
    <property type="molecule type" value="protein"/>
</dbReference>
<dbReference type="GO" id="GO:0004170">
    <property type="term" value="F:dUTP diphosphatase activity"/>
    <property type="evidence" value="ECO:0000318"/>
    <property type="project" value="GO_Central"/>
</dbReference>
<dbReference type="GO" id="GO:0000287">
    <property type="term" value="F:magnesium ion binding"/>
    <property type="evidence" value="ECO:0000318"/>
    <property type="project" value="GO_Central"/>
</dbReference>
<dbReference type="GO" id="GO:0006226">
    <property type="term" value="P:dUMP biosynthetic process"/>
    <property type="evidence" value="ECO:0000318"/>
    <property type="project" value="GO_Central"/>
</dbReference>
<dbReference type="GO" id="GO:0046081">
    <property type="term" value="P:dUTP catabolic process"/>
    <property type="evidence" value="ECO:0000318"/>
    <property type="project" value="GO_Central"/>
</dbReference>
<dbReference type="Gene3D" id="2.70.40.10">
    <property type="match status" value="1"/>
</dbReference>
<dbReference type="InterPro" id="IPR036157">
    <property type="entry name" value="dUTPase-like_sf"/>
</dbReference>
<dbReference type="SUPFAM" id="SSF51283">
    <property type="entry name" value="dUTPase-like"/>
    <property type="match status" value="1"/>
</dbReference>
<reference key="1">
    <citation type="journal article" date="2004" name="Nat. Genet.">
        <title>Complete sequencing and characterization of 21,243 full-length human cDNAs.</title>
        <authorList>
            <person name="Ota T."/>
            <person name="Suzuki Y."/>
            <person name="Nishikawa T."/>
            <person name="Otsuki T."/>
            <person name="Sugiyama T."/>
            <person name="Irie R."/>
            <person name="Wakamatsu A."/>
            <person name="Hayashi K."/>
            <person name="Sato H."/>
            <person name="Nagai K."/>
            <person name="Kimura K."/>
            <person name="Makita H."/>
            <person name="Sekine M."/>
            <person name="Obayashi M."/>
            <person name="Nishi T."/>
            <person name="Shibahara T."/>
            <person name="Tanaka T."/>
            <person name="Ishii S."/>
            <person name="Yamamoto J."/>
            <person name="Saito K."/>
            <person name="Kawai Y."/>
            <person name="Isono Y."/>
            <person name="Nakamura Y."/>
            <person name="Nagahari K."/>
            <person name="Murakami K."/>
            <person name="Yasuda T."/>
            <person name="Iwayanagi T."/>
            <person name="Wagatsuma M."/>
            <person name="Shiratori A."/>
            <person name="Sudo H."/>
            <person name="Hosoiri T."/>
            <person name="Kaku Y."/>
            <person name="Kodaira H."/>
            <person name="Kondo H."/>
            <person name="Sugawara M."/>
            <person name="Takahashi M."/>
            <person name="Kanda K."/>
            <person name="Yokoi T."/>
            <person name="Furuya T."/>
            <person name="Kikkawa E."/>
            <person name="Omura Y."/>
            <person name="Abe K."/>
            <person name="Kamihara K."/>
            <person name="Katsuta N."/>
            <person name="Sato K."/>
            <person name="Tanikawa M."/>
            <person name="Yamazaki M."/>
            <person name="Ninomiya K."/>
            <person name="Ishibashi T."/>
            <person name="Yamashita H."/>
            <person name="Murakawa K."/>
            <person name="Fujimori K."/>
            <person name="Tanai H."/>
            <person name="Kimata M."/>
            <person name="Watanabe M."/>
            <person name="Hiraoka S."/>
            <person name="Chiba Y."/>
            <person name="Ishida S."/>
            <person name="Ono Y."/>
            <person name="Takiguchi S."/>
            <person name="Watanabe S."/>
            <person name="Yosida M."/>
            <person name="Hotuta T."/>
            <person name="Kusano J."/>
            <person name="Kanehori K."/>
            <person name="Takahashi-Fujii A."/>
            <person name="Hara H."/>
            <person name="Tanase T.-O."/>
            <person name="Nomura Y."/>
            <person name="Togiya S."/>
            <person name="Komai F."/>
            <person name="Hara R."/>
            <person name="Takeuchi K."/>
            <person name="Arita M."/>
            <person name="Imose N."/>
            <person name="Musashino K."/>
            <person name="Yuuki H."/>
            <person name="Oshima A."/>
            <person name="Sasaki N."/>
            <person name="Aotsuka S."/>
            <person name="Yoshikawa Y."/>
            <person name="Matsunawa H."/>
            <person name="Ichihara T."/>
            <person name="Shiohata N."/>
            <person name="Sano S."/>
            <person name="Moriya S."/>
            <person name="Momiyama H."/>
            <person name="Satoh N."/>
            <person name="Takami S."/>
            <person name="Terashima Y."/>
            <person name="Suzuki O."/>
            <person name="Nakagawa S."/>
            <person name="Senoh A."/>
            <person name="Mizoguchi H."/>
            <person name="Goto Y."/>
            <person name="Shimizu F."/>
            <person name="Wakebe H."/>
            <person name="Hishigaki H."/>
            <person name="Watanabe T."/>
            <person name="Sugiyama A."/>
            <person name="Takemoto M."/>
            <person name="Kawakami B."/>
            <person name="Yamazaki M."/>
            <person name="Watanabe K."/>
            <person name="Kumagai A."/>
            <person name="Itakura S."/>
            <person name="Fukuzumi Y."/>
            <person name="Fujimori Y."/>
            <person name="Komiyama M."/>
            <person name="Tashiro H."/>
            <person name="Tanigami A."/>
            <person name="Fujiwara T."/>
            <person name="Ono T."/>
            <person name="Yamada K."/>
            <person name="Fujii Y."/>
            <person name="Ozaki K."/>
            <person name="Hirao M."/>
            <person name="Ohmori Y."/>
            <person name="Kawabata A."/>
            <person name="Hikiji T."/>
            <person name="Kobatake N."/>
            <person name="Inagaki H."/>
            <person name="Ikema Y."/>
            <person name="Okamoto S."/>
            <person name="Okitani R."/>
            <person name="Kawakami T."/>
            <person name="Noguchi S."/>
            <person name="Itoh T."/>
            <person name="Shigeta K."/>
            <person name="Senba T."/>
            <person name="Matsumura K."/>
            <person name="Nakajima Y."/>
            <person name="Mizuno T."/>
            <person name="Morinaga M."/>
            <person name="Sasaki M."/>
            <person name="Togashi T."/>
            <person name="Oyama M."/>
            <person name="Hata H."/>
            <person name="Watanabe M."/>
            <person name="Komatsu T."/>
            <person name="Mizushima-Sugano J."/>
            <person name="Satoh T."/>
            <person name="Shirai Y."/>
            <person name="Takahashi Y."/>
            <person name="Nakagawa K."/>
            <person name="Okumura K."/>
            <person name="Nagase T."/>
            <person name="Nomura N."/>
            <person name="Kikuchi H."/>
            <person name="Masuho Y."/>
            <person name="Yamashita R."/>
            <person name="Nakai K."/>
            <person name="Yada T."/>
            <person name="Nakamura Y."/>
            <person name="Ohara O."/>
            <person name="Isogai T."/>
            <person name="Sugano S."/>
        </authorList>
    </citation>
    <scope>NUCLEOTIDE SEQUENCE [LARGE SCALE MRNA]</scope>
    <source>
        <tissue>Spleen</tissue>
    </source>
</reference>
<comment type="similarity">
    <text evidence="1">Belongs to the dUTPase family.</text>
</comment>
<comment type="caution">
    <text evidence="1">Product of a dubious CDS prediction. Could be the remnant of an endogenous retroviral dUTPase.</text>
</comment>
<name>DUTL_HUMAN</name>
<feature type="chain" id="PRO_0000340657" description="Putative inactive deoxyuridine 5'-triphosphate nucleotidohydrolase-like protein FLJ16323">
    <location>
        <begin position="1"/>
        <end position="141"/>
    </location>
</feature>
<proteinExistence type="uncertain"/>
<evidence type="ECO:0000305" key="1"/>
<protein>
    <recommendedName>
        <fullName>Putative inactive deoxyuridine 5'-triphosphate nucleotidohydrolase-like protein FLJ16323</fullName>
        <shortName>dUTPase-like protein</shortName>
    </recommendedName>
</protein>